<evidence type="ECO:0000255" key="1">
    <source>
        <dbReference type="HAMAP-Rule" id="MF_00006"/>
    </source>
</evidence>
<dbReference type="EC" id="4.3.2.1" evidence="1"/>
<dbReference type="EMBL" id="CP000436">
    <property type="protein sequence ID" value="ABI24969.1"/>
    <property type="molecule type" value="Genomic_DNA"/>
</dbReference>
<dbReference type="SMR" id="Q0I2U1"/>
<dbReference type="KEGG" id="hso:HS_0692"/>
<dbReference type="eggNOG" id="COG0165">
    <property type="taxonomic scope" value="Bacteria"/>
</dbReference>
<dbReference type="HOGENOM" id="CLU_027272_2_3_6"/>
<dbReference type="UniPathway" id="UPA00068">
    <property type="reaction ID" value="UER00114"/>
</dbReference>
<dbReference type="GO" id="GO:0005829">
    <property type="term" value="C:cytosol"/>
    <property type="evidence" value="ECO:0007669"/>
    <property type="project" value="TreeGrafter"/>
</dbReference>
<dbReference type="GO" id="GO:0004056">
    <property type="term" value="F:argininosuccinate lyase activity"/>
    <property type="evidence" value="ECO:0007669"/>
    <property type="project" value="UniProtKB-UniRule"/>
</dbReference>
<dbReference type="GO" id="GO:0042450">
    <property type="term" value="P:arginine biosynthetic process via ornithine"/>
    <property type="evidence" value="ECO:0007669"/>
    <property type="project" value="InterPro"/>
</dbReference>
<dbReference type="GO" id="GO:0006526">
    <property type="term" value="P:L-arginine biosynthetic process"/>
    <property type="evidence" value="ECO:0007669"/>
    <property type="project" value="UniProtKB-UniRule"/>
</dbReference>
<dbReference type="CDD" id="cd01359">
    <property type="entry name" value="Argininosuccinate_lyase"/>
    <property type="match status" value="1"/>
</dbReference>
<dbReference type="FunFam" id="1.10.40.30:FF:000001">
    <property type="entry name" value="Argininosuccinate lyase"/>
    <property type="match status" value="1"/>
</dbReference>
<dbReference type="FunFam" id="1.20.200.10:FF:000006">
    <property type="entry name" value="Argininosuccinate lyase"/>
    <property type="match status" value="1"/>
</dbReference>
<dbReference type="Gene3D" id="1.10.40.30">
    <property type="entry name" value="Fumarase/aspartase (C-terminal domain)"/>
    <property type="match status" value="1"/>
</dbReference>
<dbReference type="Gene3D" id="1.20.200.10">
    <property type="entry name" value="Fumarase/aspartase (Central domain)"/>
    <property type="match status" value="1"/>
</dbReference>
<dbReference type="Gene3D" id="1.10.275.10">
    <property type="entry name" value="Fumarase/aspartase (N-terminal domain)"/>
    <property type="match status" value="1"/>
</dbReference>
<dbReference type="HAMAP" id="MF_00006">
    <property type="entry name" value="Arg_succ_lyase"/>
    <property type="match status" value="1"/>
</dbReference>
<dbReference type="InterPro" id="IPR029419">
    <property type="entry name" value="Arg_succ_lyase_C"/>
</dbReference>
<dbReference type="InterPro" id="IPR009049">
    <property type="entry name" value="Argininosuccinate_lyase"/>
</dbReference>
<dbReference type="InterPro" id="IPR024083">
    <property type="entry name" value="Fumarase/histidase_N"/>
</dbReference>
<dbReference type="InterPro" id="IPR020557">
    <property type="entry name" value="Fumarate_lyase_CS"/>
</dbReference>
<dbReference type="InterPro" id="IPR000362">
    <property type="entry name" value="Fumarate_lyase_fam"/>
</dbReference>
<dbReference type="InterPro" id="IPR022761">
    <property type="entry name" value="Fumarate_lyase_N"/>
</dbReference>
<dbReference type="InterPro" id="IPR008948">
    <property type="entry name" value="L-Aspartase-like"/>
</dbReference>
<dbReference type="NCBIfam" id="TIGR00838">
    <property type="entry name" value="argH"/>
    <property type="match status" value="1"/>
</dbReference>
<dbReference type="NCBIfam" id="NF008964">
    <property type="entry name" value="PRK12308.1"/>
    <property type="match status" value="1"/>
</dbReference>
<dbReference type="PANTHER" id="PTHR43814">
    <property type="entry name" value="ARGININOSUCCINATE LYASE"/>
    <property type="match status" value="1"/>
</dbReference>
<dbReference type="PANTHER" id="PTHR43814:SF1">
    <property type="entry name" value="ARGININOSUCCINATE LYASE"/>
    <property type="match status" value="1"/>
</dbReference>
<dbReference type="Pfam" id="PF14698">
    <property type="entry name" value="ASL_C2"/>
    <property type="match status" value="1"/>
</dbReference>
<dbReference type="Pfam" id="PF00206">
    <property type="entry name" value="Lyase_1"/>
    <property type="match status" value="1"/>
</dbReference>
<dbReference type="PRINTS" id="PR00145">
    <property type="entry name" value="ARGSUCLYASE"/>
</dbReference>
<dbReference type="PRINTS" id="PR00149">
    <property type="entry name" value="FUMRATELYASE"/>
</dbReference>
<dbReference type="SUPFAM" id="SSF48557">
    <property type="entry name" value="L-aspartase-like"/>
    <property type="match status" value="1"/>
</dbReference>
<dbReference type="PROSITE" id="PS00163">
    <property type="entry name" value="FUMARATE_LYASES"/>
    <property type="match status" value="1"/>
</dbReference>
<keyword id="KW-0028">Amino-acid biosynthesis</keyword>
<keyword id="KW-0055">Arginine biosynthesis</keyword>
<keyword id="KW-0963">Cytoplasm</keyword>
<keyword id="KW-0456">Lyase</keyword>
<organism>
    <name type="scientific">Histophilus somni (strain 129Pt)</name>
    <name type="common">Haemophilus somnus</name>
    <dbReference type="NCBI Taxonomy" id="205914"/>
    <lineage>
        <taxon>Bacteria</taxon>
        <taxon>Pseudomonadati</taxon>
        <taxon>Pseudomonadota</taxon>
        <taxon>Gammaproteobacteria</taxon>
        <taxon>Pasteurellales</taxon>
        <taxon>Pasteurellaceae</taxon>
        <taxon>Histophilus</taxon>
    </lineage>
</organism>
<accession>Q0I2U1</accession>
<proteinExistence type="inferred from homology"/>
<feature type="chain" id="PRO_1000000484" description="Argininosuccinate lyase">
    <location>
        <begin position="1"/>
        <end position="457"/>
    </location>
</feature>
<reference key="1">
    <citation type="journal article" date="2007" name="J. Bacteriol.">
        <title>Complete genome sequence of Haemophilus somnus (Histophilus somni) strain 129Pt and comparison to Haemophilus ducreyi 35000HP and Haemophilus influenzae Rd.</title>
        <authorList>
            <person name="Challacombe J.F."/>
            <person name="Duncan A.J."/>
            <person name="Brettin T.S."/>
            <person name="Bruce D."/>
            <person name="Chertkov O."/>
            <person name="Detter J.C."/>
            <person name="Han C.S."/>
            <person name="Misra M."/>
            <person name="Richardson P."/>
            <person name="Tapia R."/>
            <person name="Thayer N."/>
            <person name="Xie G."/>
            <person name="Inzana T.J."/>
        </authorList>
    </citation>
    <scope>NUCLEOTIDE SEQUENCE [LARGE SCALE GENOMIC DNA]</scope>
    <source>
        <strain>129Pt</strain>
    </source>
</reference>
<gene>
    <name evidence="1" type="primary">argH</name>
    <name type="ordered locus">HS_0692</name>
</gene>
<sequence length="457" mass="51469">MALWGGRFTQATDKRFKDFNDSLRFDYRLAEQDIEGSIGWSKALVTVNVLTQQEQQVLENALSELLIEVRSNPQKILQDDAEDIHSWVESKLIDKVGNLGKKLHTGRSRNDQVALDIKMWCKQRVTELQHSMRELQRKLVETAEHNQHVVMPGYTHLQRAQPITFAHWCMAYVEMLDRDYGRLQDAYQRMNTCPLGSGALAGTAYAIDRDLLAQDLDFAMATRNSLDSVSDRDHIIELLSTASLSMAHLSRFAEDMIIFNSGEADFVELSDRVTSGSSLMPQKKNPDACELIRGKVGRVVGALTGMLMTVKGLPLAYNKDMQEDKEGIFDALDTWQDCVDMATFVLEDIKVSVERTKEAALKGYSNSTELADYLVAKGVPFRDSHHIVGETVVYAIKVHKGLEDLSIEEFHQFSNAIEEDVYEILSLQSCLDKRCAKGGVSPLRVAEAIAEAKKRFK</sequence>
<protein>
    <recommendedName>
        <fullName evidence="1">Argininosuccinate lyase</fullName>
        <shortName evidence="1">ASAL</shortName>
        <ecNumber evidence="1">4.3.2.1</ecNumber>
    </recommendedName>
    <alternativeName>
        <fullName evidence="1">Arginosuccinase</fullName>
    </alternativeName>
</protein>
<name>ARLY_HISS1</name>
<comment type="catalytic activity">
    <reaction evidence="1">
        <text>2-(N(omega)-L-arginino)succinate = fumarate + L-arginine</text>
        <dbReference type="Rhea" id="RHEA:24020"/>
        <dbReference type="ChEBI" id="CHEBI:29806"/>
        <dbReference type="ChEBI" id="CHEBI:32682"/>
        <dbReference type="ChEBI" id="CHEBI:57472"/>
        <dbReference type="EC" id="4.3.2.1"/>
    </reaction>
</comment>
<comment type="pathway">
    <text evidence="1">Amino-acid biosynthesis; L-arginine biosynthesis; L-arginine from L-ornithine and carbamoyl phosphate: step 3/3.</text>
</comment>
<comment type="subcellular location">
    <subcellularLocation>
        <location evidence="1">Cytoplasm</location>
    </subcellularLocation>
</comment>
<comment type="similarity">
    <text evidence="1">Belongs to the lyase 1 family. Argininosuccinate lyase subfamily.</text>
</comment>